<proteinExistence type="inferred from homology"/>
<dbReference type="EMBL" id="AJ879453">
    <property type="protein sequence ID" value="CAI53807.1"/>
    <property type="molecule type" value="Genomic_DNA"/>
</dbReference>
<dbReference type="RefSeq" id="YP_319778.1">
    <property type="nucleotide sequence ID" value="NC_007407.1"/>
</dbReference>
<dbReference type="SMR" id="Q3V521"/>
<dbReference type="GeneID" id="3677470"/>
<dbReference type="GO" id="GO:0009535">
    <property type="term" value="C:chloroplast thylakoid membrane"/>
    <property type="evidence" value="ECO:0007669"/>
    <property type="project" value="UniProtKB-SubCell"/>
</dbReference>
<dbReference type="GO" id="GO:0009539">
    <property type="term" value="C:photosystem II reaction center"/>
    <property type="evidence" value="ECO:0007669"/>
    <property type="project" value="InterPro"/>
</dbReference>
<dbReference type="GO" id="GO:0015979">
    <property type="term" value="P:photosynthesis"/>
    <property type="evidence" value="ECO:0007669"/>
    <property type="project" value="UniProtKB-UniRule"/>
</dbReference>
<dbReference type="Gene3D" id="6.10.250.2070">
    <property type="match status" value="1"/>
</dbReference>
<dbReference type="HAMAP" id="MF_01305">
    <property type="entry name" value="PSII_PsbJ"/>
    <property type="match status" value="1"/>
</dbReference>
<dbReference type="InterPro" id="IPR002682">
    <property type="entry name" value="PSII_PsbJ"/>
</dbReference>
<dbReference type="InterPro" id="IPR037267">
    <property type="entry name" value="PSII_PsbJ_sf"/>
</dbReference>
<dbReference type="NCBIfam" id="NF002722">
    <property type="entry name" value="PRK02565.1"/>
    <property type="match status" value="1"/>
</dbReference>
<dbReference type="PANTHER" id="PTHR34812">
    <property type="entry name" value="PHOTOSYSTEM II REACTION CENTER PROTEIN J"/>
    <property type="match status" value="1"/>
</dbReference>
<dbReference type="PANTHER" id="PTHR34812:SF3">
    <property type="entry name" value="PHOTOSYSTEM II REACTION CENTER PROTEIN J"/>
    <property type="match status" value="1"/>
</dbReference>
<dbReference type="Pfam" id="PF01788">
    <property type="entry name" value="PsbJ"/>
    <property type="match status" value="1"/>
</dbReference>
<dbReference type="SUPFAM" id="SSF161021">
    <property type="entry name" value="Photosystem II reaction center protein J, PsbJ"/>
    <property type="match status" value="1"/>
</dbReference>
<gene>
    <name evidence="1" type="primary">psbJ</name>
</gene>
<comment type="function">
    <text evidence="1">One of the components of the core complex of photosystem II (PSII). PSII is a light-driven water:plastoquinone oxidoreductase that uses light energy to abstract electrons from H(2)O, generating O(2) and a proton gradient subsequently used for ATP formation. It consists of a core antenna complex that captures photons, and an electron transfer chain that converts photonic excitation into a charge separation.</text>
</comment>
<comment type="subunit">
    <text evidence="1">PSII is composed of 1 copy each of membrane proteins PsbA, PsbB, PsbC, PsbD, PsbE, PsbF, PsbH, PsbI, PsbJ, PsbK, PsbL, PsbM, PsbT, PsbX, PsbY, PsbZ, Psb30/Ycf12, at least 3 peripheral proteins of the oxygen-evolving complex and a large number of cofactors. It forms dimeric complexes.</text>
</comment>
<comment type="subcellular location">
    <subcellularLocation>
        <location evidence="1">Plastid</location>
        <location evidence="1">Chloroplast thylakoid membrane</location>
        <topology evidence="1">Single-pass membrane protein</topology>
    </subcellularLocation>
</comment>
<comment type="similarity">
    <text evidence="1">Belongs to the PsbJ family.</text>
</comment>
<evidence type="ECO:0000255" key="1">
    <source>
        <dbReference type="HAMAP-Rule" id="MF_01305"/>
    </source>
</evidence>
<geneLocation type="chloroplast"/>
<keyword id="KW-0150">Chloroplast</keyword>
<keyword id="KW-0472">Membrane</keyword>
<keyword id="KW-0602">Photosynthesis</keyword>
<keyword id="KW-0604">Photosystem II</keyword>
<keyword id="KW-0934">Plastid</keyword>
<keyword id="KW-0674">Reaction center</keyword>
<keyword id="KW-0793">Thylakoid</keyword>
<keyword id="KW-0812">Transmembrane</keyword>
<keyword id="KW-1133">Transmembrane helix</keyword>
<protein>
    <recommendedName>
        <fullName evidence="1">Photosystem II reaction center protein J</fullName>
        <shortName evidence="1">PSII-J</shortName>
    </recommendedName>
</protein>
<feature type="chain" id="PRO_0000292243" description="Photosystem II reaction center protein J">
    <location>
        <begin position="1"/>
        <end position="40"/>
    </location>
</feature>
<feature type="transmembrane region" description="Helical" evidence="1">
    <location>
        <begin position="8"/>
        <end position="28"/>
    </location>
</feature>
<name>PSBJ_ACOCL</name>
<organism>
    <name type="scientific">Acorus calamus</name>
    <name type="common">Sweet flag</name>
    <dbReference type="NCBI Taxonomy" id="4465"/>
    <lineage>
        <taxon>Eukaryota</taxon>
        <taxon>Viridiplantae</taxon>
        <taxon>Streptophyta</taxon>
        <taxon>Embryophyta</taxon>
        <taxon>Tracheophyta</taxon>
        <taxon>Spermatophyta</taxon>
        <taxon>Magnoliopsida</taxon>
        <taxon>Liliopsida</taxon>
        <taxon>Acoraceae</taxon>
        <taxon>Acorus</taxon>
    </lineage>
</organism>
<accession>Q3V521</accession>
<reference key="1">
    <citation type="journal article" date="2005" name="Mol. Biol. Evol.">
        <title>Analysis of Acorus calamus chloroplast genome and its phylogenetic implications.</title>
        <authorList>
            <person name="Goremykin V.V."/>
            <person name="Holland B."/>
            <person name="Hirsch-Ernst K.I."/>
            <person name="Hellwig F.H."/>
        </authorList>
    </citation>
    <scope>NUCLEOTIDE SEQUENCE [LARGE SCALE GENOMIC DNA]</scope>
</reference>
<sequence length="40" mass="4061">MADTTGRIPLWLIGTVAGIPVIGSVGVFFYGSYSGLGSSL</sequence>